<accession>P22245</accession>
<organism>
    <name type="scientific">Drosophila differens</name>
    <name type="common">Fruit fly</name>
    <dbReference type="NCBI Taxonomy" id="7219"/>
    <lineage>
        <taxon>Eukaryota</taxon>
        <taxon>Metazoa</taxon>
        <taxon>Ecdysozoa</taxon>
        <taxon>Arthropoda</taxon>
        <taxon>Hexapoda</taxon>
        <taxon>Insecta</taxon>
        <taxon>Pterygota</taxon>
        <taxon>Neoptera</taxon>
        <taxon>Endopterygota</taxon>
        <taxon>Diptera</taxon>
        <taxon>Brachycera</taxon>
        <taxon>Muscomorpha</taxon>
        <taxon>Ephydroidea</taxon>
        <taxon>Drosophilidae</taxon>
        <taxon>Drosophila</taxon>
        <taxon>Hawaiian Drosophila</taxon>
    </lineage>
</organism>
<feature type="initiator methionine" description="Removed" evidence="1">
    <location>
        <position position="1"/>
    </location>
</feature>
<feature type="chain" id="PRO_0000054458" description="Alcohol dehydrogenase">
    <location>
        <begin position="2"/>
        <end position="254"/>
    </location>
</feature>
<feature type="active site" description="Proton acceptor" evidence="2">
    <location>
        <position position="151"/>
    </location>
</feature>
<feature type="binding site" evidence="1">
    <location>
        <begin position="10"/>
        <end position="33"/>
    </location>
    <ligand>
        <name>NAD(+)</name>
        <dbReference type="ChEBI" id="CHEBI:57540"/>
    </ligand>
</feature>
<feature type="binding site" evidence="1">
    <location>
        <position position="138"/>
    </location>
    <ligand>
        <name>substrate</name>
    </ligand>
</feature>
<sequence length="254" mass="27452">MVIANSNIIFVAGLGGIGLDTSREIVKSGPKNLVVLDRVDNPAAIAELKALNPKVTVTFYPYDVTVPVAETKKLLKTIFDELKTVDLLINGAGILDDNQIERTIAVNFTGTVNTTTAIMDFWDKRKGGPGGVIANICSVTGFNSIYQVPVYSASKAAALSFTTSLAKLAHITGVTAYSINPGITKTVLVHKFNSWLSVEPRVAELLLEHPTQTTLQCAQNFVKAIEANQNGAIWKLDLGRLDAIEWTKHWDSGI</sequence>
<evidence type="ECO:0000250" key="1"/>
<evidence type="ECO:0000255" key="2">
    <source>
        <dbReference type="PROSITE-ProRule" id="PRU10001"/>
    </source>
</evidence>
<evidence type="ECO:0000305" key="3"/>
<comment type="catalytic activity">
    <reaction evidence="2">
        <text>a primary alcohol + NAD(+) = an aldehyde + NADH + H(+)</text>
        <dbReference type="Rhea" id="RHEA:10736"/>
        <dbReference type="ChEBI" id="CHEBI:15378"/>
        <dbReference type="ChEBI" id="CHEBI:15734"/>
        <dbReference type="ChEBI" id="CHEBI:17478"/>
        <dbReference type="ChEBI" id="CHEBI:57540"/>
        <dbReference type="ChEBI" id="CHEBI:57945"/>
        <dbReference type="EC" id="1.1.1.1"/>
    </reaction>
</comment>
<comment type="catalytic activity">
    <reaction evidence="2">
        <text>a secondary alcohol + NAD(+) = a ketone + NADH + H(+)</text>
        <dbReference type="Rhea" id="RHEA:10740"/>
        <dbReference type="ChEBI" id="CHEBI:15378"/>
        <dbReference type="ChEBI" id="CHEBI:17087"/>
        <dbReference type="ChEBI" id="CHEBI:35681"/>
        <dbReference type="ChEBI" id="CHEBI:57540"/>
        <dbReference type="ChEBI" id="CHEBI:57945"/>
        <dbReference type="EC" id="1.1.1.1"/>
    </reaction>
</comment>
<comment type="subunit">
    <text>Homodimer.</text>
</comment>
<comment type="similarity">
    <text evidence="3">Belongs to the short-chain dehydrogenases/reductases (SDR) family.</text>
</comment>
<dbReference type="EC" id="1.1.1.1"/>
<dbReference type="EMBL" id="M63303">
    <property type="protein sequence ID" value="AAA28350.1"/>
    <property type="molecule type" value="Genomic_DNA"/>
</dbReference>
<dbReference type="PIR" id="E23724">
    <property type="entry name" value="E23724"/>
</dbReference>
<dbReference type="SMR" id="P22245"/>
<dbReference type="GO" id="GO:0005737">
    <property type="term" value="C:cytoplasm"/>
    <property type="evidence" value="ECO:0007669"/>
    <property type="project" value="TreeGrafter"/>
</dbReference>
<dbReference type="GO" id="GO:0004022">
    <property type="term" value="F:alcohol dehydrogenase (NAD+) activity"/>
    <property type="evidence" value="ECO:0000250"/>
    <property type="project" value="UniProtKB"/>
</dbReference>
<dbReference type="GO" id="GO:0006066">
    <property type="term" value="P:alcohol metabolic process"/>
    <property type="evidence" value="ECO:0007669"/>
    <property type="project" value="InterPro"/>
</dbReference>
<dbReference type="CDD" id="cd05323">
    <property type="entry name" value="ADH_SDR_c_like"/>
    <property type="match status" value="1"/>
</dbReference>
<dbReference type="FunFam" id="3.40.50.720:FF:000302">
    <property type="entry name" value="Alcohol dehydrogenase"/>
    <property type="match status" value="1"/>
</dbReference>
<dbReference type="Gene3D" id="3.40.50.720">
    <property type="entry name" value="NAD(P)-binding Rossmann-like Domain"/>
    <property type="match status" value="1"/>
</dbReference>
<dbReference type="InterPro" id="IPR002425">
    <property type="entry name" value="ADH_Drosophila-type"/>
</dbReference>
<dbReference type="InterPro" id="IPR036291">
    <property type="entry name" value="NAD(P)-bd_dom_sf"/>
</dbReference>
<dbReference type="InterPro" id="IPR020904">
    <property type="entry name" value="Sc_DH/Rdtase_CS"/>
</dbReference>
<dbReference type="InterPro" id="IPR002347">
    <property type="entry name" value="SDR_fam"/>
</dbReference>
<dbReference type="PANTHER" id="PTHR44229">
    <property type="entry name" value="15-HYDROXYPROSTAGLANDIN DEHYDROGENASE [NAD(+)]"/>
    <property type="match status" value="1"/>
</dbReference>
<dbReference type="PANTHER" id="PTHR44229:SF8">
    <property type="entry name" value="ALCOHOL DEHYDROGENASE-RELATED"/>
    <property type="match status" value="1"/>
</dbReference>
<dbReference type="Pfam" id="PF00106">
    <property type="entry name" value="adh_short"/>
    <property type="match status" value="1"/>
</dbReference>
<dbReference type="PRINTS" id="PR01168">
    <property type="entry name" value="ALCDHDRGNASE"/>
</dbReference>
<dbReference type="PRINTS" id="PR01167">
    <property type="entry name" value="INSADHFAMILY"/>
</dbReference>
<dbReference type="PRINTS" id="PR00080">
    <property type="entry name" value="SDRFAMILY"/>
</dbReference>
<dbReference type="SUPFAM" id="SSF51735">
    <property type="entry name" value="NAD(P)-binding Rossmann-fold domains"/>
    <property type="match status" value="1"/>
</dbReference>
<dbReference type="PROSITE" id="PS00061">
    <property type="entry name" value="ADH_SHORT"/>
    <property type="match status" value="1"/>
</dbReference>
<proteinExistence type="inferred from homology"/>
<keyword id="KW-0520">NAD</keyword>
<keyword id="KW-0560">Oxidoreductase</keyword>
<gene>
    <name type="primary">Adh</name>
</gene>
<reference key="1">
    <citation type="journal article" date="1991" name="Mol. Biol. Evol.">
        <title>Rates of DNA change and phylogeny from the DNA sequences of the alcohol dehydrogenase gene for five closely related species of Hawaiian Drosophila.</title>
        <authorList>
            <person name="Rowan R.G."/>
            <person name="Hunt J.A."/>
        </authorList>
    </citation>
    <scope>NUCLEOTIDE SEQUENCE [GENOMIC DNA]</scope>
</reference>
<protein>
    <recommendedName>
        <fullName>Alcohol dehydrogenase</fullName>
        <ecNumber>1.1.1.1</ecNumber>
    </recommendedName>
</protein>
<name>ADH_DRODI</name>